<reference key="1">
    <citation type="journal article" date="1998" name="Nature">
        <title>Deciphering the biology of Mycobacterium tuberculosis from the complete genome sequence.</title>
        <authorList>
            <person name="Cole S.T."/>
            <person name="Brosch R."/>
            <person name="Parkhill J."/>
            <person name="Garnier T."/>
            <person name="Churcher C.M."/>
            <person name="Harris D.E."/>
            <person name="Gordon S.V."/>
            <person name="Eiglmeier K."/>
            <person name="Gas S."/>
            <person name="Barry C.E. III"/>
            <person name="Tekaia F."/>
            <person name="Badcock K."/>
            <person name="Basham D."/>
            <person name="Brown D."/>
            <person name="Chillingworth T."/>
            <person name="Connor R."/>
            <person name="Davies R.M."/>
            <person name="Devlin K."/>
            <person name="Feltwell T."/>
            <person name="Gentles S."/>
            <person name="Hamlin N."/>
            <person name="Holroyd S."/>
            <person name="Hornsby T."/>
            <person name="Jagels K."/>
            <person name="Krogh A."/>
            <person name="McLean J."/>
            <person name="Moule S."/>
            <person name="Murphy L.D."/>
            <person name="Oliver S."/>
            <person name="Osborne J."/>
            <person name="Quail M.A."/>
            <person name="Rajandream M.A."/>
            <person name="Rogers J."/>
            <person name="Rutter S."/>
            <person name="Seeger K."/>
            <person name="Skelton S."/>
            <person name="Squares S."/>
            <person name="Squares R."/>
            <person name="Sulston J.E."/>
            <person name="Taylor K."/>
            <person name="Whitehead S."/>
            <person name="Barrell B.G."/>
        </authorList>
    </citation>
    <scope>NUCLEOTIDE SEQUENCE [LARGE SCALE GENOMIC DNA]</scope>
    <source>
        <strain>ATCC 25618 / H37Rv</strain>
    </source>
</reference>
<reference key="2">
    <citation type="journal article" date="2011" name="Mol. Cell. Proteomics">
        <title>Proteogenomic analysis of Mycobacterium tuberculosis by high resolution mass spectrometry.</title>
        <authorList>
            <person name="Kelkar D.S."/>
            <person name="Kumar D."/>
            <person name="Kumar P."/>
            <person name="Balakrishnan L."/>
            <person name="Muthusamy B."/>
            <person name="Yadav A.K."/>
            <person name="Shrivastava P."/>
            <person name="Marimuthu A."/>
            <person name="Anand S."/>
            <person name="Sundaram H."/>
            <person name="Kingsbury R."/>
            <person name="Harsha H.C."/>
            <person name="Nair B."/>
            <person name="Prasad T.S."/>
            <person name="Chauhan D.S."/>
            <person name="Katoch K."/>
            <person name="Katoch V.M."/>
            <person name="Kumar P."/>
            <person name="Chaerkady R."/>
            <person name="Ramachandran S."/>
            <person name="Dash D."/>
            <person name="Pandey A."/>
        </authorList>
    </citation>
    <scope>IDENTIFICATION BY MASS SPECTROMETRY [LARGE SCALE ANALYSIS]</scope>
    <source>
        <strain>ATCC 25618 / H37Rv</strain>
    </source>
</reference>
<reference key="3">
    <citation type="journal article" date="2013" name="Nucleic Acids Res.">
        <title>Mycobacterium tuberculosis RsdA provides a conformational rationale for selective regulation of sigma-factor activity by proteolysis.</title>
        <authorList>
            <person name="Jaiswal R.K."/>
            <person name="Prabha T.S."/>
            <person name="Manjeera G."/>
            <person name="Gopal B."/>
        </authorList>
    </citation>
    <scope>FUNCTION AS A PROTEASE</scope>
    <scope>SUBUNIT</scope>
    <source>
        <strain>ATCC 25618 / H37Rv</strain>
    </source>
</reference>
<reference key="4">
    <citation type="journal article" date="2007" name="Acta Crystallogr. D">
        <title>Insights into the inter-ring plasticity of caseinolytic proteases from the X-ray structure of Mycobacterium tuberculosis ClpP1.</title>
        <authorList>
            <person name="Ingvarsson H."/>
            <person name="Mate M.J."/>
            <person name="Hogbom M."/>
            <person name="Portnoi D."/>
            <person name="Benaroudj N."/>
            <person name="Alzari P.M."/>
            <person name="Ortiz-Lombardia M."/>
            <person name="Unge T."/>
        </authorList>
    </citation>
    <scope>X-RAY CRYSTALLOGRAPHY (2.60 ANGSTROMS)</scope>
    <scope>SUBUNIT</scope>
    <source>
        <strain>ATCC 25618 / H37Rv</strain>
    </source>
</reference>
<sequence length="200" mass="21708">MSQVTDMRSNSQGLSLTDSVYERLLSERIIFLGSEVNDEIANRLCAQILLLAAEDASKDISLYINSPGGSISAGMAIYDTMVLAPCDIATYAMGMAASMGEFLLAAGTKGKRYALPHARILMHQPLGGVTGSAADIAIQAEQFAVIKKEMFRLNAEFTGQPIERIEADSDRDRWFTAAEALEYGFVDHIITRAHVNGEAQ</sequence>
<gene>
    <name evidence="1" type="primary">clpP1</name>
    <name type="synonym">clpP</name>
    <name type="ordered locus">Rv2461c</name>
    <name type="ORF">MTV008.17c</name>
</gene>
<protein>
    <recommendedName>
        <fullName evidence="1">ATP-dependent Clp protease proteolytic subunit 1</fullName>
        <ecNumber evidence="1">3.4.21.92</ecNumber>
    </recommendedName>
    <alternativeName>
        <fullName evidence="1">Endopeptidase Clp 1</fullName>
    </alternativeName>
</protein>
<comment type="function">
    <text evidence="1 3">Cleaves peptides in various proteins in a process that requires ATP hydrolysis. Has a chymotrypsin-like activity. Plays a major role in the degradation of misfolded proteins (By similarity). Degrades anti-sigma-D factor (rsdA) when present in a complex with ClpP2 and ClpX. Does not seem to act on anti-sigma-L factor (rslA).</text>
</comment>
<comment type="catalytic activity">
    <reaction evidence="1">
        <text>Hydrolysis of proteins to small peptides in the presence of ATP and magnesium. alpha-casein is the usual test substrate. In the absence of ATP, only oligopeptides shorter than five residues are hydrolyzed (such as succinyl-Leu-Tyr-|-NHMec, and Leu-Tyr-Leu-|-Tyr-Trp, in which cleavage of the -Tyr-|-Leu- and -Tyr-|-Trp bonds also occurs).</text>
        <dbReference type="EC" id="3.4.21.92"/>
    </reaction>
</comment>
<comment type="subunit">
    <text evidence="1 2 3">Fourteen ClpP subunits assemble into 2 heptameric rings which stack back to back to give a disk-like structure with a central cavity, resembling the structure of eukaryotic proteasomes. Forms a complex with ClpP2 and ClpX.</text>
</comment>
<comment type="subcellular location">
    <subcellularLocation>
        <location evidence="1">Cytoplasm</location>
    </subcellularLocation>
</comment>
<comment type="similarity">
    <text evidence="1">Belongs to the peptidase S14 family.</text>
</comment>
<evidence type="ECO:0000255" key="1">
    <source>
        <dbReference type="HAMAP-Rule" id="MF_00444"/>
    </source>
</evidence>
<evidence type="ECO:0000269" key="2">
    <source>
    </source>
</evidence>
<evidence type="ECO:0000269" key="3">
    <source>
    </source>
</evidence>
<evidence type="ECO:0007829" key="4">
    <source>
        <dbReference type="PDB" id="2CBY"/>
    </source>
</evidence>
<evidence type="ECO:0007829" key="5">
    <source>
        <dbReference type="PDB" id="2CE3"/>
    </source>
</evidence>
<evidence type="ECO:0007829" key="6">
    <source>
        <dbReference type="PDB" id="5E0S"/>
    </source>
</evidence>
<evidence type="ECO:0007829" key="7">
    <source>
        <dbReference type="PDB" id="6IW7"/>
    </source>
</evidence>
<dbReference type="EC" id="3.4.21.92" evidence="1"/>
<dbReference type="EMBL" id="AL123456">
    <property type="protein sequence ID" value="CCP45254.1"/>
    <property type="molecule type" value="Genomic_DNA"/>
</dbReference>
<dbReference type="PIR" id="D70865">
    <property type="entry name" value="D70865"/>
</dbReference>
<dbReference type="RefSeq" id="WP_003412650.1">
    <property type="nucleotide sequence ID" value="NZ_NVQJ01000024.1"/>
</dbReference>
<dbReference type="RefSeq" id="YP_177883.1">
    <property type="nucleotide sequence ID" value="NC_000962.3"/>
</dbReference>
<dbReference type="PDB" id="2C8T">
    <property type="method" value="X-ray"/>
    <property type="resolution" value="3.00 A"/>
    <property type="chains" value="A/B/C/D/E/F/G/H/I/J/K/L/M/N=2-200"/>
</dbReference>
<dbReference type="PDB" id="2CBY">
    <property type="method" value="X-ray"/>
    <property type="resolution" value="2.60 A"/>
    <property type="chains" value="A/B/C/D/E/F/G=1-200"/>
</dbReference>
<dbReference type="PDB" id="2CE3">
    <property type="method" value="X-ray"/>
    <property type="resolution" value="2.60 A"/>
    <property type="chains" value="A/B/C/D/E/F/G/H/I/J/K/L/M/N=1-200"/>
</dbReference>
<dbReference type="PDB" id="4U0G">
    <property type="method" value="X-ray"/>
    <property type="resolution" value="3.20 A"/>
    <property type="chains" value="H/I/J/K/L/M/N/V/W/X/Y/Z/a/b=7-200"/>
</dbReference>
<dbReference type="PDB" id="4U0H">
    <property type="method" value="X-ray"/>
    <property type="resolution" value="3.25 A"/>
    <property type="chains" value="A/B/C/D/E/F/G=7-200"/>
</dbReference>
<dbReference type="PDB" id="5DZK">
    <property type="method" value="X-ray"/>
    <property type="resolution" value="3.07 A"/>
    <property type="chains" value="H/I/J/K/L/M/N/h/i/j/k/l/m/n=1-200"/>
</dbReference>
<dbReference type="PDB" id="5E0S">
    <property type="method" value="X-ray"/>
    <property type="resolution" value="2.90 A"/>
    <property type="chains" value="H/I/J/K/L/M/N/h/i/j/k/l/m/n=1-200"/>
</dbReference>
<dbReference type="PDB" id="6IW7">
    <property type="method" value="X-ray"/>
    <property type="resolution" value="2.69 A"/>
    <property type="chains" value="B/D/G/I/K/M/N=7-200"/>
</dbReference>
<dbReference type="PDB" id="6VGK">
    <property type="method" value="EM"/>
    <property type="resolution" value="3.10 A"/>
    <property type="chains" value="H/I/J/K/L/M/N=7-200"/>
</dbReference>
<dbReference type="PDB" id="6VGN">
    <property type="method" value="EM"/>
    <property type="resolution" value="3.10 A"/>
    <property type="chains" value="H/I/J/K/L/M/N=7-200"/>
</dbReference>
<dbReference type="PDB" id="6VGQ">
    <property type="method" value="EM"/>
    <property type="resolution" value="3.50 A"/>
    <property type="chains" value="H/I/J/K/L/M/N=7-200"/>
</dbReference>
<dbReference type="PDB" id="7X8X">
    <property type="method" value="X-ray"/>
    <property type="resolution" value="3.24 A"/>
    <property type="chains" value="B/D/G/I/K/M/N/P/R/U/W/Y/Z/b=16-192"/>
</dbReference>
<dbReference type="PDB" id="8YD4">
    <property type="method" value="EM"/>
    <property type="resolution" value="3.69 A"/>
    <property type="chains" value="A/B/C/D/E/F/G=1-200"/>
</dbReference>
<dbReference type="PDBsum" id="2C8T"/>
<dbReference type="PDBsum" id="2CBY"/>
<dbReference type="PDBsum" id="2CE3"/>
<dbReference type="PDBsum" id="4U0G"/>
<dbReference type="PDBsum" id="4U0H"/>
<dbReference type="PDBsum" id="5DZK"/>
<dbReference type="PDBsum" id="5E0S"/>
<dbReference type="PDBsum" id="6IW7"/>
<dbReference type="PDBsum" id="6VGK"/>
<dbReference type="PDBsum" id="6VGN"/>
<dbReference type="PDBsum" id="6VGQ"/>
<dbReference type="PDBsum" id="7X8X"/>
<dbReference type="PDBsum" id="8YD4"/>
<dbReference type="EMDB" id="EMD-21197"/>
<dbReference type="EMDB" id="EMD-21198"/>
<dbReference type="EMDB" id="EMD-21199"/>
<dbReference type="EMDB" id="EMD-39164"/>
<dbReference type="SMR" id="P9WPC5"/>
<dbReference type="FunCoup" id="P9WPC5">
    <property type="interactions" value="411"/>
</dbReference>
<dbReference type="STRING" id="83332.Rv2461c"/>
<dbReference type="ChEMBL" id="CHEMBL4662931"/>
<dbReference type="MEROPS" id="S14.008"/>
<dbReference type="PaxDb" id="83332-Rv2461c"/>
<dbReference type="DNASU" id="888176"/>
<dbReference type="GeneID" id="45426451"/>
<dbReference type="GeneID" id="888176"/>
<dbReference type="KEGG" id="mtu:Rv2461c"/>
<dbReference type="KEGG" id="mtv:RVBD_2461c"/>
<dbReference type="PATRIC" id="fig|83332.111.peg.2755"/>
<dbReference type="TubercuList" id="Rv2461c"/>
<dbReference type="eggNOG" id="COG0740">
    <property type="taxonomic scope" value="Bacteria"/>
</dbReference>
<dbReference type="InParanoid" id="P9WPC5"/>
<dbReference type="OrthoDB" id="9802800at2"/>
<dbReference type="PhylomeDB" id="P9WPC5"/>
<dbReference type="BRENDA" id="3.4.21.92">
    <property type="organism ID" value="3445"/>
</dbReference>
<dbReference type="EvolutionaryTrace" id="P9WPC5"/>
<dbReference type="Proteomes" id="UP000001584">
    <property type="component" value="Chromosome"/>
</dbReference>
<dbReference type="GO" id="GO:0005829">
    <property type="term" value="C:cytosol"/>
    <property type="evidence" value="ECO:0007005"/>
    <property type="project" value="MTBBASE"/>
</dbReference>
<dbReference type="GO" id="GO:0009368">
    <property type="term" value="C:endopeptidase Clp complex"/>
    <property type="evidence" value="ECO:0000318"/>
    <property type="project" value="GO_Central"/>
</dbReference>
<dbReference type="GO" id="GO:0005886">
    <property type="term" value="C:plasma membrane"/>
    <property type="evidence" value="ECO:0007005"/>
    <property type="project" value="MTBBASE"/>
</dbReference>
<dbReference type="GO" id="GO:0004176">
    <property type="term" value="F:ATP-dependent peptidase activity"/>
    <property type="evidence" value="ECO:0000318"/>
    <property type="project" value="GO_Central"/>
</dbReference>
<dbReference type="GO" id="GO:0051117">
    <property type="term" value="F:ATPase binding"/>
    <property type="evidence" value="ECO:0000318"/>
    <property type="project" value="GO_Central"/>
</dbReference>
<dbReference type="GO" id="GO:0004252">
    <property type="term" value="F:serine-type endopeptidase activity"/>
    <property type="evidence" value="ECO:0000318"/>
    <property type="project" value="GO_Central"/>
</dbReference>
<dbReference type="GO" id="GO:0006515">
    <property type="term" value="P:protein quality control for misfolded or incompletely synthesized proteins"/>
    <property type="evidence" value="ECO:0000318"/>
    <property type="project" value="GO_Central"/>
</dbReference>
<dbReference type="CDD" id="cd07017">
    <property type="entry name" value="S14_ClpP_2"/>
    <property type="match status" value="1"/>
</dbReference>
<dbReference type="FunFam" id="3.90.226.10:FF:000002">
    <property type="entry name" value="ATP-dependent Clp protease proteolytic subunit"/>
    <property type="match status" value="1"/>
</dbReference>
<dbReference type="Gene3D" id="3.90.226.10">
    <property type="entry name" value="2-enoyl-CoA Hydratase, Chain A, domain 1"/>
    <property type="match status" value="1"/>
</dbReference>
<dbReference type="HAMAP" id="MF_00444">
    <property type="entry name" value="ClpP"/>
    <property type="match status" value="1"/>
</dbReference>
<dbReference type="InterPro" id="IPR001907">
    <property type="entry name" value="ClpP"/>
</dbReference>
<dbReference type="InterPro" id="IPR029045">
    <property type="entry name" value="ClpP/crotonase-like_dom_sf"/>
</dbReference>
<dbReference type="InterPro" id="IPR023562">
    <property type="entry name" value="ClpP/TepA"/>
</dbReference>
<dbReference type="InterPro" id="IPR033135">
    <property type="entry name" value="ClpP_His_AS"/>
</dbReference>
<dbReference type="NCBIfam" id="NF001368">
    <property type="entry name" value="PRK00277.1"/>
    <property type="match status" value="1"/>
</dbReference>
<dbReference type="NCBIfam" id="NF009205">
    <property type="entry name" value="PRK12553.1"/>
    <property type="match status" value="1"/>
</dbReference>
<dbReference type="PANTHER" id="PTHR10381">
    <property type="entry name" value="ATP-DEPENDENT CLP PROTEASE PROTEOLYTIC SUBUNIT"/>
    <property type="match status" value="1"/>
</dbReference>
<dbReference type="PANTHER" id="PTHR10381:SF70">
    <property type="entry name" value="ATP-DEPENDENT CLP PROTEASE PROTEOLYTIC SUBUNIT"/>
    <property type="match status" value="1"/>
</dbReference>
<dbReference type="Pfam" id="PF00574">
    <property type="entry name" value="CLP_protease"/>
    <property type="match status" value="1"/>
</dbReference>
<dbReference type="PRINTS" id="PR00127">
    <property type="entry name" value="CLPPROTEASEP"/>
</dbReference>
<dbReference type="SUPFAM" id="SSF52096">
    <property type="entry name" value="ClpP/crotonase"/>
    <property type="match status" value="1"/>
</dbReference>
<dbReference type="PROSITE" id="PS00382">
    <property type="entry name" value="CLP_PROTEASE_HIS"/>
    <property type="match status" value="1"/>
</dbReference>
<proteinExistence type="evidence at protein level"/>
<keyword id="KW-0002">3D-structure</keyword>
<keyword id="KW-0963">Cytoplasm</keyword>
<keyword id="KW-0378">Hydrolase</keyword>
<keyword id="KW-0645">Protease</keyword>
<keyword id="KW-1185">Reference proteome</keyword>
<keyword id="KW-0720">Serine protease</keyword>
<name>CLPP1_MYCTU</name>
<feature type="chain" id="PRO_0000179596" description="ATP-dependent Clp protease proteolytic subunit 1">
    <location>
        <begin position="1"/>
        <end position="200"/>
    </location>
</feature>
<feature type="active site" description="Nucleophile" evidence="1">
    <location>
        <position position="98"/>
    </location>
</feature>
<feature type="active site" evidence="1">
    <location>
        <position position="123"/>
    </location>
</feature>
<feature type="strand" evidence="6">
    <location>
        <begin position="12"/>
        <end position="14"/>
    </location>
</feature>
<feature type="helix" evidence="4">
    <location>
        <begin position="16"/>
        <end position="25"/>
    </location>
</feature>
<feature type="turn" evidence="4">
    <location>
        <begin position="26"/>
        <end position="28"/>
    </location>
</feature>
<feature type="strand" evidence="4">
    <location>
        <begin position="29"/>
        <end position="32"/>
    </location>
</feature>
<feature type="helix" evidence="4">
    <location>
        <begin position="38"/>
        <end position="54"/>
    </location>
</feature>
<feature type="strand" evidence="4">
    <location>
        <begin position="56"/>
        <end position="58"/>
    </location>
</feature>
<feature type="strand" evidence="4">
    <location>
        <begin position="60"/>
        <end position="66"/>
    </location>
</feature>
<feature type="helix" evidence="4">
    <location>
        <begin position="71"/>
        <end position="83"/>
    </location>
</feature>
<feature type="strand" evidence="5">
    <location>
        <begin position="84"/>
        <end position="86"/>
    </location>
</feature>
<feature type="strand" evidence="4">
    <location>
        <begin position="88"/>
        <end position="97"/>
    </location>
</feature>
<feature type="helix" evidence="4">
    <location>
        <begin position="99"/>
        <end position="105"/>
    </location>
</feature>
<feature type="strand" evidence="4">
    <location>
        <begin position="112"/>
        <end position="114"/>
    </location>
</feature>
<feature type="strand" evidence="4">
    <location>
        <begin position="119"/>
        <end position="121"/>
    </location>
</feature>
<feature type="strand" evidence="7">
    <location>
        <begin position="126"/>
        <end position="129"/>
    </location>
</feature>
<feature type="helix" evidence="4">
    <location>
        <begin position="137"/>
        <end position="158"/>
    </location>
</feature>
<feature type="helix" evidence="4">
    <location>
        <begin position="162"/>
        <end position="170"/>
    </location>
</feature>
<feature type="strand" evidence="4">
    <location>
        <begin position="174"/>
        <end position="176"/>
    </location>
</feature>
<feature type="helix" evidence="4">
    <location>
        <begin position="177"/>
        <end position="183"/>
    </location>
</feature>
<feature type="strand" evidence="4">
    <location>
        <begin position="187"/>
        <end position="189"/>
    </location>
</feature>
<organism>
    <name type="scientific">Mycobacterium tuberculosis (strain ATCC 25618 / H37Rv)</name>
    <dbReference type="NCBI Taxonomy" id="83332"/>
    <lineage>
        <taxon>Bacteria</taxon>
        <taxon>Bacillati</taxon>
        <taxon>Actinomycetota</taxon>
        <taxon>Actinomycetes</taxon>
        <taxon>Mycobacteriales</taxon>
        <taxon>Mycobacteriaceae</taxon>
        <taxon>Mycobacterium</taxon>
        <taxon>Mycobacterium tuberculosis complex</taxon>
    </lineage>
</organism>
<accession>P9WPC5</accession>
<accession>L0TBA3</accession>
<accession>O53188</accession>
<accession>P0A526</accession>